<dbReference type="EC" id="5.4.2.7" evidence="1"/>
<dbReference type="EMBL" id="CP000382">
    <property type="protein sequence ID" value="ABK61687.1"/>
    <property type="molecule type" value="Genomic_DNA"/>
</dbReference>
<dbReference type="RefSeq" id="WP_011721586.1">
    <property type="nucleotide sequence ID" value="NC_008593.1"/>
</dbReference>
<dbReference type="SMR" id="A0PYX6"/>
<dbReference type="STRING" id="386415.NT01CX_1497"/>
<dbReference type="KEGG" id="cno:NT01CX_1497"/>
<dbReference type="eggNOG" id="COG1015">
    <property type="taxonomic scope" value="Bacteria"/>
</dbReference>
<dbReference type="HOGENOM" id="CLU_053861_0_0_9"/>
<dbReference type="UniPathway" id="UPA00002">
    <property type="reaction ID" value="UER00467"/>
</dbReference>
<dbReference type="Proteomes" id="UP000008220">
    <property type="component" value="Chromosome"/>
</dbReference>
<dbReference type="GO" id="GO:0005829">
    <property type="term" value="C:cytosol"/>
    <property type="evidence" value="ECO:0007669"/>
    <property type="project" value="TreeGrafter"/>
</dbReference>
<dbReference type="GO" id="GO:0000287">
    <property type="term" value="F:magnesium ion binding"/>
    <property type="evidence" value="ECO:0007669"/>
    <property type="project" value="InterPro"/>
</dbReference>
<dbReference type="GO" id="GO:0030145">
    <property type="term" value="F:manganese ion binding"/>
    <property type="evidence" value="ECO:0007669"/>
    <property type="project" value="UniProtKB-UniRule"/>
</dbReference>
<dbReference type="GO" id="GO:0008973">
    <property type="term" value="F:phosphopentomutase activity"/>
    <property type="evidence" value="ECO:0007669"/>
    <property type="project" value="UniProtKB-UniRule"/>
</dbReference>
<dbReference type="GO" id="GO:0006018">
    <property type="term" value="P:2-deoxyribose 1-phosphate catabolic process"/>
    <property type="evidence" value="ECO:0007669"/>
    <property type="project" value="UniProtKB-UniRule"/>
</dbReference>
<dbReference type="GO" id="GO:0006015">
    <property type="term" value="P:5-phosphoribose 1-diphosphate biosynthetic process"/>
    <property type="evidence" value="ECO:0007669"/>
    <property type="project" value="UniProtKB-UniPathway"/>
</dbReference>
<dbReference type="GO" id="GO:0043094">
    <property type="term" value="P:metabolic compound salvage"/>
    <property type="evidence" value="ECO:0007669"/>
    <property type="project" value="InterPro"/>
</dbReference>
<dbReference type="GO" id="GO:0009117">
    <property type="term" value="P:nucleotide metabolic process"/>
    <property type="evidence" value="ECO:0007669"/>
    <property type="project" value="InterPro"/>
</dbReference>
<dbReference type="CDD" id="cd16009">
    <property type="entry name" value="PPM"/>
    <property type="match status" value="1"/>
</dbReference>
<dbReference type="FunFam" id="3.30.70.1250:FF:000001">
    <property type="entry name" value="Phosphopentomutase"/>
    <property type="match status" value="1"/>
</dbReference>
<dbReference type="Gene3D" id="3.40.720.10">
    <property type="entry name" value="Alkaline Phosphatase, subunit A"/>
    <property type="match status" value="1"/>
</dbReference>
<dbReference type="Gene3D" id="3.30.70.1250">
    <property type="entry name" value="Phosphopentomutase"/>
    <property type="match status" value="1"/>
</dbReference>
<dbReference type="HAMAP" id="MF_00740">
    <property type="entry name" value="Phosphopentomut"/>
    <property type="match status" value="1"/>
</dbReference>
<dbReference type="InterPro" id="IPR017850">
    <property type="entry name" value="Alkaline_phosphatase_core_sf"/>
</dbReference>
<dbReference type="InterPro" id="IPR010045">
    <property type="entry name" value="DeoB"/>
</dbReference>
<dbReference type="InterPro" id="IPR006124">
    <property type="entry name" value="Metalloenzyme"/>
</dbReference>
<dbReference type="InterPro" id="IPR024052">
    <property type="entry name" value="Phosphopentomutase_DeoB_cap_sf"/>
</dbReference>
<dbReference type="NCBIfam" id="TIGR01696">
    <property type="entry name" value="deoB"/>
    <property type="match status" value="1"/>
</dbReference>
<dbReference type="NCBIfam" id="NF003766">
    <property type="entry name" value="PRK05362.1"/>
    <property type="match status" value="1"/>
</dbReference>
<dbReference type="PANTHER" id="PTHR21110">
    <property type="entry name" value="PHOSPHOPENTOMUTASE"/>
    <property type="match status" value="1"/>
</dbReference>
<dbReference type="PANTHER" id="PTHR21110:SF0">
    <property type="entry name" value="PHOSPHOPENTOMUTASE"/>
    <property type="match status" value="1"/>
</dbReference>
<dbReference type="Pfam" id="PF01676">
    <property type="entry name" value="Metalloenzyme"/>
    <property type="match status" value="1"/>
</dbReference>
<dbReference type="PIRSF" id="PIRSF001491">
    <property type="entry name" value="Ppentomutase"/>
    <property type="match status" value="1"/>
</dbReference>
<dbReference type="SUPFAM" id="SSF53649">
    <property type="entry name" value="Alkaline phosphatase-like"/>
    <property type="match status" value="1"/>
</dbReference>
<dbReference type="SUPFAM" id="SSF143856">
    <property type="entry name" value="DeoB insert domain-like"/>
    <property type="match status" value="1"/>
</dbReference>
<keyword id="KW-0963">Cytoplasm</keyword>
<keyword id="KW-0413">Isomerase</keyword>
<keyword id="KW-0464">Manganese</keyword>
<keyword id="KW-0479">Metal-binding</keyword>
<keyword id="KW-1185">Reference proteome</keyword>
<evidence type="ECO:0000255" key="1">
    <source>
        <dbReference type="HAMAP-Rule" id="MF_00740"/>
    </source>
</evidence>
<proteinExistence type="inferred from homology"/>
<comment type="function">
    <text evidence="1">Isomerase that catalyzes the conversion of deoxy-ribose 1-phosphate (dRib-1-P) and ribose 1-phosphate (Rib-1-P) to deoxy-ribose 5-phosphate (dRib-5-P) and ribose 5-phosphate (Rib-5-P), respectively.</text>
</comment>
<comment type="catalytic activity">
    <reaction evidence="1">
        <text>2-deoxy-alpha-D-ribose 1-phosphate = 2-deoxy-D-ribose 5-phosphate</text>
        <dbReference type="Rhea" id="RHEA:27658"/>
        <dbReference type="ChEBI" id="CHEBI:57259"/>
        <dbReference type="ChEBI" id="CHEBI:62877"/>
        <dbReference type="EC" id="5.4.2.7"/>
    </reaction>
</comment>
<comment type="catalytic activity">
    <reaction evidence="1">
        <text>alpha-D-ribose 1-phosphate = D-ribose 5-phosphate</text>
        <dbReference type="Rhea" id="RHEA:18793"/>
        <dbReference type="ChEBI" id="CHEBI:57720"/>
        <dbReference type="ChEBI" id="CHEBI:78346"/>
        <dbReference type="EC" id="5.4.2.7"/>
    </reaction>
</comment>
<comment type="cofactor">
    <cofactor evidence="1">
        <name>Mn(2+)</name>
        <dbReference type="ChEBI" id="CHEBI:29035"/>
    </cofactor>
    <text evidence="1">Binds 2 manganese ions.</text>
</comment>
<comment type="pathway">
    <text evidence="1">Carbohydrate degradation; 2-deoxy-D-ribose 1-phosphate degradation; D-glyceraldehyde 3-phosphate and acetaldehyde from 2-deoxy-alpha-D-ribose 1-phosphate: step 1/2.</text>
</comment>
<comment type="subcellular location">
    <subcellularLocation>
        <location evidence="1">Cytoplasm</location>
    </subcellularLocation>
</comment>
<comment type="similarity">
    <text evidence="1">Belongs to the phosphopentomutase family.</text>
</comment>
<feature type="chain" id="PRO_1000148240" description="Phosphopentomutase">
    <location>
        <begin position="1"/>
        <end position="390"/>
    </location>
</feature>
<feature type="binding site" evidence="1">
    <location>
        <position position="11"/>
    </location>
    <ligand>
        <name>Mn(2+)</name>
        <dbReference type="ChEBI" id="CHEBI:29035"/>
        <label>1</label>
    </ligand>
</feature>
<feature type="binding site" evidence="1">
    <location>
        <position position="283"/>
    </location>
    <ligand>
        <name>Mn(2+)</name>
        <dbReference type="ChEBI" id="CHEBI:29035"/>
        <label>2</label>
    </ligand>
</feature>
<feature type="binding site" evidence="1">
    <location>
        <position position="288"/>
    </location>
    <ligand>
        <name>Mn(2+)</name>
        <dbReference type="ChEBI" id="CHEBI:29035"/>
        <label>2</label>
    </ligand>
</feature>
<feature type="binding site" evidence="1">
    <location>
        <position position="324"/>
    </location>
    <ligand>
        <name>Mn(2+)</name>
        <dbReference type="ChEBI" id="CHEBI:29035"/>
        <label>1</label>
    </ligand>
</feature>
<feature type="binding site" evidence="1">
    <location>
        <position position="325"/>
    </location>
    <ligand>
        <name>Mn(2+)</name>
        <dbReference type="ChEBI" id="CHEBI:29035"/>
        <label>1</label>
    </ligand>
</feature>
<feature type="binding site" evidence="1">
    <location>
        <position position="336"/>
    </location>
    <ligand>
        <name>Mn(2+)</name>
        <dbReference type="ChEBI" id="CHEBI:29035"/>
        <label>2</label>
    </ligand>
</feature>
<accession>A0PYX6</accession>
<organism>
    <name type="scientific">Clostridium novyi (strain NT)</name>
    <dbReference type="NCBI Taxonomy" id="386415"/>
    <lineage>
        <taxon>Bacteria</taxon>
        <taxon>Bacillati</taxon>
        <taxon>Bacillota</taxon>
        <taxon>Clostridia</taxon>
        <taxon>Eubacteriales</taxon>
        <taxon>Clostridiaceae</taxon>
        <taxon>Clostridium</taxon>
    </lineage>
</organism>
<gene>
    <name evidence="1" type="primary">deoB</name>
    <name type="ordered locus">NT01CX_1497</name>
</gene>
<protein>
    <recommendedName>
        <fullName evidence="1">Phosphopentomutase</fullName>
        <ecNumber evidence="1">5.4.2.7</ecNumber>
    </recommendedName>
    <alternativeName>
        <fullName evidence="1">Phosphodeoxyribomutase</fullName>
    </alternativeName>
</protein>
<sequence length="390" mass="43124">MINRVIWIVLDSVGMGALPDADKYGDVGANTIGNVSKFLGGLKTPNMSKLGLGNIDEIKGIEKVESPIGCYARFKEMSNGKDTTTGHWEMVGINSEQAFPTYPNGFPRDLIEKFEELTGRKVIGNKTASGTEIIKELGEEHVKTGALIVYTSADSVFQIAAHEEVVPLDELYKICEIARNLLTGEHAVARVIARPFEGEVGSFTRTSNRRDFSLVPPYDTVLDNLKKNNLNVMAVGKIEDIFSGKGVTEAVHTKDNMDGVDKTLEYMKEDKKGLIFTNLVDFDMKWGHRNDAEAYGKGIEAFDVRLGEILNEMKDTDVLFITADHGCDPTMPGTDHSREHVPFLAYGKALKENVNLGTRESFADMGQTIAEIFDVEPIRHGKSFLKEIVK</sequence>
<name>DEOB_CLONN</name>
<reference key="1">
    <citation type="journal article" date="2006" name="Nat. Biotechnol.">
        <title>The genome and transcriptomes of the anti-tumor agent Clostridium novyi-NT.</title>
        <authorList>
            <person name="Bettegowda C."/>
            <person name="Huang X."/>
            <person name="Lin J."/>
            <person name="Cheong I."/>
            <person name="Kohli M."/>
            <person name="Szabo S.A."/>
            <person name="Zhang X."/>
            <person name="Diaz L.A. Jr."/>
            <person name="Velculescu V.E."/>
            <person name="Parmigiani G."/>
            <person name="Kinzler K.W."/>
            <person name="Vogelstein B."/>
            <person name="Zhou S."/>
        </authorList>
    </citation>
    <scope>NUCLEOTIDE SEQUENCE [LARGE SCALE GENOMIC DNA]</scope>
    <source>
        <strain>NT</strain>
    </source>
</reference>